<proteinExistence type="inferred from homology"/>
<feature type="signal peptide" evidence="1">
    <location>
        <begin position="1"/>
        <end position="20"/>
    </location>
</feature>
<feature type="chain" id="PRO_0000020375" description="Membrane protein insertase YidC 1">
    <location>
        <begin position="21"/>
        <end position="257"/>
    </location>
</feature>
<feature type="transmembrane region" description="Helical" evidence="1">
    <location>
        <begin position="35"/>
        <end position="55"/>
    </location>
</feature>
<feature type="transmembrane region" description="Helical" evidence="1">
    <location>
        <begin position="59"/>
        <end position="79"/>
    </location>
</feature>
<feature type="transmembrane region" description="Helical" evidence="1">
    <location>
        <begin position="129"/>
        <end position="149"/>
    </location>
</feature>
<feature type="transmembrane region" description="Helical" evidence="1">
    <location>
        <begin position="160"/>
        <end position="180"/>
    </location>
</feature>
<feature type="transmembrane region" description="Helical" evidence="1">
    <location>
        <begin position="205"/>
        <end position="225"/>
    </location>
</feature>
<feature type="lipid moiety-binding region" description="N-palmitoyl cysteine" evidence="1">
    <location>
        <position position="21"/>
    </location>
</feature>
<feature type="lipid moiety-binding region" description="S-diacylglycerol cysteine" evidence="1">
    <location>
        <position position="21"/>
    </location>
</feature>
<dbReference type="EMBL" id="AB013492">
    <property type="protein sequence ID" value="BAA82682.1"/>
    <property type="molecule type" value="Genomic_DNA"/>
</dbReference>
<dbReference type="EMBL" id="BA000004">
    <property type="protein sequence ID" value="BAB07783.1"/>
    <property type="molecule type" value="Genomic_DNA"/>
</dbReference>
<dbReference type="PIR" id="H84157">
    <property type="entry name" value="H84157"/>
</dbReference>
<dbReference type="RefSeq" id="WP_010900188.1">
    <property type="nucleotide sequence ID" value="NC_002570.2"/>
</dbReference>
<dbReference type="SMR" id="Q9RCA5"/>
<dbReference type="STRING" id="272558.gene:10729982"/>
<dbReference type="TCDB" id="2.A.9.3.5">
    <property type="family name" value="the membrane protein insertase (yidc/alb3/oxa1) family"/>
</dbReference>
<dbReference type="KEGG" id="bha:BH4064"/>
<dbReference type="eggNOG" id="COG0706">
    <property type="taxonomic scope" value="Bacteria"/>
</dbReference>
<dbReference type="HOGENOM" id="CLU_036138_5_0_9"/>
<dbReference type="Proteomes" id="UP000001258">
    <property type="component" value="Chromosome"/>
</dbReference>
<dbReference type="GO" id="GO:0005886">
    <property type="term" value="C:plasma membrane"/>
    <property type="evidence" value="ECO:0007669"/>
    <property type="project" value="UniProtKB-SubCell"/>
</dbReference>
<dbReference type="GO" id="GO:0032977">
    <property type="term" value="F:membrane insertase activity"/>
    <property type="evidence" value="ECO:0007669"/>
    <property type="project" value="InterPro"/>
</dbReference>
<dbReference type="GO" id="GO:0051205">
    <property type="term" value="P:protein insertion into membrane"/>
    <property type="evidence" value="ECO:0007669"/>
    <property type="project" value="TreeGrafter"/>
</dbReference>
<dbReference type="GO" id="GO:0015031">
    <property type="term" value="P:protein transport"/>
    <property type="evidence" value="ECO:0007669"/>
    <property type="project" value="UniProtKB-KW"/>
</dbReference>
<dbReference type="CDD" id="cd20070">
    <property type="entry name" value="5TM_YidC_Alb3"/>
    <property type="match status" value="1"/>
</dbReference>
<dbReference type="HAMAP" id="MF_01811">
    <property type="entry name" value="YidC_type2"/>
    <property type="match status" value="1"/>
</dbReference>
<dbReference type="InterPro" id="IPR001708">
    <property type="entry name" value="YidC/ALB3/OXA1/COX18"/>
</dbReference>
<dbReference type="InterPro" id="IPR028055">
    <property type="entry name" value="YidC/Oxa/ALB_C"/>
</dbReference>
<dbReference type="InterPro" id="IPR023060">
    <property type="entry name" value="YidC/YidC1/YidC2_Firmicutes"/>
</dbReference>
<dbReference type="InterPro" id="IPR047196">
    <property type="entry name" value="YidC_ALB_C"/>
</dbReference>
<dbReference type="NCBIfam" id="NF002803">
    <property type="entry name" value="PRK02944.1"/>
    <property type="match status" value="1"/>
</dbReference>
<dbReference type="NCBIfam" id="TIGR03592">
    <property type="entry name" value="yidC_oxa1_cterm"/>
    <property type="match status" value="1"/>
</dbReference>
<dbReference type="PANTHER" id="PTHR12428:SF65">
    <property type="entry name" value="CYTOCHROME C OXIDASE ASSEMBLY PROTEIN COX18, MITOCHONDRIAL"/>
    <property type="match status" value="1"/>
</dbReference>
<dbReference type="PANTHER" id="PTHR12428">
    <property type="entry name" value="OXA1"/>
    <property type="match status" value="1"/>
</dbReference>
<dbReference type="Pfam" id="PF02096">
    <property type="entry name" value="60KD_IMP"/>
    <property type="match status" value="1"/>
</dbReference>
<dbReference type="PRINTS" id="PR00701">
    <property type="entry name" value="60KDINNERMP"/>
</dbReference>
<dbReference type="PRINTS" id="PR01900">
    <property type="entry name" value="YIDCPROTEIN"/>
</dbReference>
<dbReference type="PROSITE" id="PS51257">
    <property type="entry name" value="PROKAR_LIPOPROTEIN"/>
    <property type="match status" value="1"/>
</dbReference>
<accession>Q9RCA5</accession>
<sequence>MYRKFGMAAMLVSILLLMTGCFNVNEPINAQSEGIWDSYFVYPLSWLMIYFANAFNGSFGLAIIVVTLLIRLLILPLMIKQLKSTRAMQALQPEMQALREKYSAKDQRTQQKLQQETMALFQKHGVNPLAGCFPVLIQMPILLAFYHAIMRTREIGDEHFLWFVLNQPDPILLPIIAGITTFLQQKMMMVTDNPQMKVLLYVMPVMILVFAMFLPSSLALYWVIGNLFMILQTYFITGPNVGAKKVAADVKVGGKKK</sequence>
<organism>
    <name type="scientific">Halalkalibacterium halodurans (strain ATCC BAA-125 / DSM 18197 / FERM 7344 / JCM 9153 / C-125)</name>
    <name type="common">Bacillus halodurans</name>
    <dbReference type="NCBI Taxonomy" id="272558"/>
    <lineage>
        <taxon>Bacteria</taxon>
        <taxon>Bacillati</taxon>
        <taxon>Bacillota</taxon>
        <taxon>Bacilli</taxon>
        <taxon>Bacillales</taxon>
        <taxon>Bacillaceae</taxon>
        <taxon>Halalkalibacterium (ex Joshi et al. 2022)</taxon>
    </lineage>
</organism>
<reference key="1">
    <citation type="journal article" date="1999" name="Biosci. Biotechnol. Biochem.">
        <title>Replication origin region of the chromosome of alkaliphilic Bacillus halodurans C-125.</title>
        <authorList>
            <person name="Takami H."/>
            <person name="Masui N."/>
            <person name="Nakasone K."/>
            <person name="Horikoshi K."/>
        </authorList>
    </citation>
    <scope>NUCLEOTIDE SEQUENCE [GENOMIC DNA]</scope>
    <source>
        <strain>ATCC BAA-125 / DSM 18197 / FERM 7344 / JCM 9153 / C-125</strain>
    </source>
</reference>
<reference key="2">
    <citation type="journal article" date="2000" name="Nucleic Acids Res.">
        <title>Complete genome sequence of the alkaliphilic bacterium Bacillus halodurans and genomic sequence comparison with Bacillus subtilis.</title>
        <authorList>
            <person name="Takami H."/>
            <person name="Nakasone K."/>
            <person name="Takaki Y."/>
            <person name="Maeno G."/>
            <person name="Sasaki R."/>
            <person name="Masui N."/>
            <person name="Fuji F."/>
            <person name="Hirama C."/>
            <person name="Nakamura Y."/>
            <person name="Ogasawara N."/>
            <person name="Kuhara S."/>
            <person name="Horikoshi K."/>
        </authorList>
    </citation>
    <scope>NUCLEOTIDE SEQUENCE [LARGE SCALE GENOMIC DNA]</scope>
    <source>
        <strain>ATCC BAA-125 / DSM 18197 / FERM 7344 / JCM 9153 / C-125</strain>
    </source>
</reference>
<evidence type="ECO:0000255" key="1">
    <source>
        <dbReference type="HAMAP-Rule" id="MF_01811"/>
    </source>
</evidence>
<keyword id="KW-1003">Cell membrane</keyword>
<keyword id="KW-0143">Chaperone</keyword>
<keyword id="KW-0449">Lipoprotein</keyword>
<keyword id="KW-0472">Membrane</keyword>
<keyword id="KW-0564">Palmitate</keyword>
<keyword id="KW-0653">Protein transport</keyword>
<keyword id="KW-1185">Reference proteome</keyword>
<keyword id="KW-0732">Signal</keyword>
<keyword id="KW-0812">Transmembrane</keyword>
<keyword id="KW-1133">Transmembrane helix</keyword>
<keyword id="KW-0813">Transport</keyword>
<comment type="function">
    <text evidence="1">Required for the insertion and/or proper folding and/or complex formation of integral membrane proteins into the membrane. Involved in integration of membrane proteins that insert both dependently and independently of the Sec translocase complex, as well as at least some lipoproteins.</text>
</comment>
<comment type="subcellular location">
    <subcellularLocation>
        <location evidence="1">Cell membrane</location>
        <topology evidence="1">Multi-pass membrane protein</topology>
    </subcellularLocation>
</comment>
<comment type="similarity">
    <text evidence="1">Belongs to the OXA1/ALB3/YidC family. Type 2 subfamily.</text>
</comment>
<name>YIDC1_HALH5</name>
<protein>
    <recommendedName>
        <fullName evidence="1">Membrane protein insertase YidC 1</fullName>
    </recommendedName>
    <alternativeName>
        <fullName evidence="1">Foldase YidC 1</fullName>
    </alternativeName>
    <alternativeName>
        <fullName evidence="1">Membrane integrase YidC 1</fullName>
    </alternativeName>
    <alternativeName>
        <fullName evidence="1">Membrane protein YidC 1</fullName>
    </alternativeName>
</protein>
<gene>
    <name evidence="1" type="primary">yidC1</name>
    <name type="ordered locus">BH4064</name>
</gene>